<dbReference type="EMBL" id="CP000749">
    <property type="protein sequence ID" value="ABR69693.1"/>
    <property type="molecule type" value="Genomic_DNA"/>
</dbReference>
<dbReference type="SMR" id="A6VTB4"/>
<dbReference type="STRING" id="400668.Mmwyl1_0759"/>
<dbReference type="KEGG" id="mmw:Mmwyl1_0759"/>
<dbReference type="eggNOG" id="COG2924">
    <property type="taxonomic scope" value="Bacteria"/>
</dbReference>
<dbReference type="HOGENOM" id="CLU_170994_0_0_6"/>
<dbReference type="OrthoDB" id="9804318at2"/>
<dbReference type="GO" id="GO:0005829">
    <property type="term" value="C:cytosol"/>
    <property type="evidence" value="ECO:0007669"/>
    <property type="project" value="TreeGrafter"/>
</dbReference>
<dbReference type="GO" id="GO:0005506">
    <property type="term" value="F:iron ion binding"/>
    <property type="evidence" value="ECO:0007669"/>
    <property type="project" value="UniProtKB-UniRule"/>
</dbReference>
<dbReference type="GO" id="GO:0034599">
    <property type="term" value="P:cellular response to oxidative stress"/>
    <property type="evidence" value="ECO:0007669"/>
    <property type="project" value="TreeGrafter"/>
</dbReference>
<dbReference type="Gene3D" id="1.10.3880.10">
    <property type="entry name" value="Fe(II) trafficking protein YggX"/>
    <property type="match status" value="1"/>
</dbReference>
<dbReference type="HAMAP" id="MF_00686">
    <property type="entry name" value="Fe_traffic_YggX"/>
    <property type="match status" value="1"/>
</dbReference>
<dbReference type="InterPro" id="IPR007457">
    <property type="entry name" value="Fe_traffick_prot_YggX"/>
</dbReference>
<dbReference type="InterPro" id="IPR036766">
    <property type="entry name" value="Fe_traffick_prot_YggX_sf"/>
</dbReference>
<dbReference type="NCBIfam" id="NF003817">
    <property type="entry name" value="PRK05408.1"/>
    <property type="match status" value="1"/>
</dbReference>
<dbReference type="PANTHER" id="PTHR36965">
    <property type="entry name" value="FE(2+)-TRAFFICKING PROTEIN-RELATED"/>
    <property type="match status" value="1"/>
</dbReference>
<dbReference type="PANTHER" id="PTHR36965:SF1">
    <property type="entry name" value="FE(2+)-TRAFFICKING PROTEIN-RELATED"/>
    <property type="match status" value="1"/>
</dbReference>
<dbReference type="Pfam" id="PF04362">
    <property type="entry name" value="Iron_traffic"/>
    <property type="match status" value="1"/>
</dbReference>
<dbReference type="PIRSF" id="PIRSF029827">
    <property type="entry name" value="Fe_traffic_YggX"/>
    <property type="match status" value="1"/>
</dbReference>
<dbReference type="SUPFAM" id="SSF111148">
    <property type="entry name" value="YggX-like"/>
    <property type="match status" value="1"/>
</dbReference>
<sequence>MANTVFCKKFQKEMEALDRAPLPGAKGQEILQNVSKQAWQEWQHLQTMLINEKQLNLMQSESRKYVMEQMDKFFNNEATDKLAGYVDPDDIKEL</sequence>
<evidence type="ECO:0000255" key="1">
    <source>
        <dbReference type="HAMAP-Rule" id="MF_00686"/>
    </source>
</evidence>
<reference key="1">
    <citation type="submission" date="2007-06" db="EMBL/GenBank/DDBJ databases">
        <title>Complete sequence of Marinomonas sp. MWYL1.</title>
        <authorList>
            <consortium name="US DOE Joint Genome Institute"/>
            <person name="Copeland A."/>
            <person name="Lucas S."/>
            <person name="Lapidus A."/>
            <person name="Barry K."/>
            <person name="Glavina del Rio T."/>
            <person name="Dalin E."/>
            <person name="Tice H."/>
            <person name="Pitluck S."/>
            <person name="Kiss H."/>
            <person name="Brettin T."/>
            <person name="Bruce D."/>
            <person name="Detter J.C."/>
            <person name="Han C."/>
            <person name="Schmutz J."/>
            <person name="Larimer F."/>
            <person name="Land M."/>
            <person name="Hauser L."/>
            <person name="Kyrpides N."/>
            <person name="Kim E."/>
            <person name="Johnston A.W.B."/>
            <person name="Todd J.D."/>
            <person name="Rogers R."/>
            <person name="Wexler M."/>
            <person name="Bond P.L."/>
            <person name="Li Y."/>
            <person name="Richardson P."/>
        </authorList>
    </citation>
    <scope>NUCLEOTIDE SEQUENCE [LARGE SCALE GENOMIC DNA]</scope>
    <source>
        <strain>MWYL1</strain>
    </source>
</reference>
<gene>
    <name type="ordered locus">Mmwyl1_0759</name>
</gene>
<name>FETP_MARMS</name>
<protein>
    <recommendedName>
        <fullName evidence="1">Probable Fe(2+)-trafficking protein</fullName>
    </recommendedName>
</protein>
<accession>A6VTB4</accession>
<feature type="chain" id="PRO_1000083078" description="Probable Fe(2+)-trafficking protein">
    <location>
        <begin position="1"/>
        <end position="94"/>
    </location>
</feature>
<keyword id="KW-0408">Iron</keyword>
<comment type="function">
    <text evidence="1">Could be a mediator in iron transactions between iron acquisition and iron-requiring processes, such as synthesis and/or repair of Fe-S clusters in biosynthetic enzymes.</text>
</comment>
<comment type="similarity">
    <text evidence="1">Belongs to the Fe(2+)-trafficking protein family.</text>
</comment>
<organism>
    <name type="scientific">Marinomonas sp. (strain MWYL1)</name>
    <dbReference type="NCBI Taxonomy" id="400668"/>
    <lineage>
        <taxon>Bacteria</taxon>
        <taxon>Pseudomonadati</taxon>
        <taxon>Pseudomonadota</taxon>
        <taxon>Gammaproteobacteria</taxon>
        <taxon>Oceanospirillales</taxon>
        <taxon>Oceanospirillaceae</taxon>
        <taxon>Marinomonas</taxon>
    </lineage>
</organism>
<proteinExistence type="inferred from homology"/>